<name>FWCH2_PONAB</name>
<accession>Q5R9P4</accession>
<dbReference type="EMBL" id="CR859341">
    <property type="protein sequence ID" value="CAH91516.1"/>
    <property type="molecule type" value="mRNA"/>
</dbReference>
<dbReference type="RefSeq" id="NP_001125891.1">
    <property type="nucleotide sequence ID" value="NM_001132419.1"/>
</dbReference>
<dbReference type="FunCoup" id="Q5R9P4">
    <property type="interactions" value="317"/>
</dbReference>
<dbReference type="STRING" id="9601.ENSPPYP00000007931"/>
<dbReference type="GeneID" id="100172824"/>
<dbReference type="KEGG" id="pon:100172824"/>
<dbReference type="CTD" id="114984"/>
<dbReference type="eggNOG" id="ENOG502T3Y9">
    <property type="taxonomic scope" value="Eukaryota"/>
</dbReference>
<dbReference type="InParanoid" id="Q5R9P4"/>
<dbReference type="OrthoDB" id="9836688at2759"/>
<dbReference type="Proteomes" id="UP000001595">
    <property type="component" value="Unplaced"/>
</dbReference>
<dbReference type="InterPro" id="IPR029279">
    <property type="entry name" value="FLYWCH_N"/>
</dbReference>
<dbReference type="InterPro" id="IPR040312">
    <property type="entry name" value="FWCH1/FWCH2"/>
</dbReference>
<dbReference type="PANTHER" id="PTHR31665:SF0">
    <property type="entry name" value="FLYWCH FAMILY MEMBER 2"/>
    <property type="match status" value="1"/>
</dbReference>
<dbReference type="PANTHER" id="PTHR31665">
    <property type="entry name" value="FLYWCH FAMILY MEMBER 2-RELATED"/>
    <property type="match status" value="1"/>
</dbReference>
<dbReference type="Pfam" id="PF15423">
    <property type="entry name" value="FLYWCH_N"/>
    <property type="match status" value="1"/>
</dbReference>
<organism>
    <name type="scientific">Pongo abelii</name>
    <name type="common">Sumatran orangutan</name>
    <name type="synonym">Pongo pygmaeus abelii</name>
    <dbReference type="NCBI Taxonomy" id="9601"/>
    <lineage>
        <taxon>Eukaryota</taxon>
        <taxon>Metazoa</taxon>
        <taxon>Chordata</taxon>
        <taxon>Craniata</taxon>
        <taxon>Vertebrata</taxon>
        <taxon>Euteleostomi</taxon>
        <taxon>Mammalia</taxon>
        <taxon>Eutheria</taxon>
        <taxon>Euarchontoglires</taxon>
        <taxon>Primates</taxon>
        <taxon>Haplorrhini</taxon>
        <taxon>Catarrhini</taxon>
        <taxon>Hominidae</taxon>
        <taxon>Pongo</taxon>
    </lineage>
</organism>
<keyword id="KW-0597">Phosphoprotein</keyword>
<keyword id="KW-1185">Reference proteome</keyword>
<feature type="chain" id="PRO_0000316524" description="FLYWCH family member 2">
    <location>
        <begin position="1"/>
        <end position="140"/>
    </location>
</feature>
<feature type="region of interest" description="Disordered" evidence="2">
    <location>
        <begin position="1"/>
        <end position="39"/>
    </location>
</feature>
<feature type="region of interest" description="Disordered" evidence="2">
    <location>
        <begin position="83"/>
        <end position="140"/>
    </location>
</feature>
<feature type="compositionally biased region" description="Basic and acidic residues" evidence="2">
    <location>
        <begin position="98"/>
        <end position="114"/>
    </location>
</feature>
<feature type="compositionally biased region" description="Low complexity" evidence="2">
    <location>
        <begin position="118"/>
        <end position="127"/>
    </location>
</feature>
<feature type="modified residue" description="Phosphoserine" evidence="1">
    <location>
        <position position="21"/>
    </location>
</feature>
<proteinExistence type="evidence at transcript level"/>
<sequence length="140" mass="14420">MPLPEPSEQEGESVKAGQEPSSKPGTEVVPAAPRKPREFSKLVLLTASKDSTKVAGAKRKGVHCVMSLGVPGPATLAKALLQTHPEAQRAIEAAPQEPEQKRSRQDPGADRTEDSGLAAGPPEAAGENSAPCSVAPGKSL</sequence>
<protein>
    <recommendedName>
        <fullName>FLYWCH family member 2</fullName>
    </recommendedName>
</protein>
<reference key="1">
    <citation type="submission" date="2004-11" db="EMBL/GenBank/DDBJ databases">
        <authorList>
            <consortium name="The German cDNA consortium"/>
        </authorList>
    </citation>
    <scope>NUCLEOTIDE SEQUENCE [LARGE SCALE MRNA]</scope>
    <source>
        <tissue>Brain cortex</tissue>
    </source>
</reference>
<evidence type="ECO:0000250" key="1">
    <source>
        <dbReference type="UniProtKB" id="Q96CP2"/>
    </source>
</evidence>
<evidence type="ECO:0000256" key="2">
    <source>
        <dbReference type="SAM" id="MobiDB-lite"/>
    </source>
</evidence>
<gene>
    <name type="primary">FLYWCH2</name>
</gene>